<organism>
    <name type="scientific">Panulirus interruptus</name>
    <name type="common">California spiny lobster</name>
    <name type="synonym">Palinurus interruptus</name>
    <dbReference type="NCBI Taxonomy" id="6735"/>
    <lineage>
        <taxon>Eukaryota</taxon>
        <taxon>Metazoa</taxon>
        <taxon>Ecdysozoa</taxon>
        <taxon>Arthropoda</taxon>
        <taxon>Crustacea</taxon>
        <taxon>Multicrustacea</taxon>
        <taxon>Malacostraca</taxon>
        <taxon>Eumalacostraca</taxon>
        <taxon>Eucarida</taxon>
        <taxon>Decapoda</taxon>
        <taxon>Pleocyemata</taxon>
        <taxon>Achelata</taxon>
        <taxon>Palinuroidea</taxon>
        <taxon>Palinuridae</taxon>
        <taxon>Panulirus</taxon>
    </lineage>
</organism>
<comment type="function">
    <text>Clotting protein.</text>
</comment>
<comment type="subunit">
    <text>Homodimer.</text>
</comment>
<comment type="subcellular location">
    <subcellularLocation>
        <location>Secreted</location>
        <location>Extracellular space</location>
    </subcellularLocation>
</comment>
<comment type="tissue specificity">
    <text>Secreted into the hemolymph.</text>
</comment>
<sequence>LQPKLEYQYKYHGIVALGIPSYKTQFYDAH</sequence>
<proteinExistence type="evidence at protein level"/>
<feature type="chain" id="PRO_0000134402" description="Fibrinogen">
    <location>
        <begin position="1"/>
        <end position="30" status="greater than"/>
    </location>
</feature>
<feature type="non-terminal residue">
    <location>
        <position position="30"/>
    </location>
</feature>
<reference key="1">
    <citation type="journal article" date="1990" name="Biochem. Biophys. Res. Commun.">
        <title>The amino-terminal sequence of lobster fibrinogen reveals common ancestry with vitellogenins.</title>
        <authorList>
            <person name="Doolittle R.F."/>
            <person name="Riley M."/>
        </authorList>
    </citation>
    <scope>PROTEIN SEQUENCE</scope>
</reference>
<protein>
    <recommendedName>
        <fullName>Fibrinogen</fullName>
    </recommendedName>
</protein>
<name>FIBR_PANIN</name>
<dbReference type="PIR" id="A34622">
    <property type="entry name" value="A34622"/>
</dbReference>
<dbReference type="GO" id="GO:0005576">
    <property type="term" value="C:extracellular region"/>
    <property type="evidence" value="ECO:0007669"/>
    <property type="project" value="UniProtKB-SubCell"/>
</dbReference>
<dbReference type="GO" id="GO:0008289">
    <property type="term" value="F:lipid binding"/>
    <property type="evidence" value="ECO:0007669"/>
    <property type="project" value="UniProtKB-KW"/>
</dbReference>
<dbReference type="GO" id="GO:0042381">
    <property type="term" value="P:hemolymph coagulation"/>
    <property type="evidence" value="ECO:0007669"/>
    <property type="project" value="UniProtKB-KW"/>
</dbReference>
<keyword id="KW-0903">Direct protein sequencing</keyword>
<keyword id="KW-0353">Hemolymph clotting</keyword>
<keyword id="KW-0446">Lipid-binding</keyword>
<keyword id="KW-0964">Secreted</keyword>
<accession>P22775</accession>